<reference key="1">
    <citation type="journal article" date="1997" name="Nature">
        <title>The complete genome sequence of the Gram-positive bacterium Bacillus subtilis.</title>
        <authorList>
            <person name="Kunst F."/>
            <person name="Ogasawara N."/>
            <person name="Moszer I."/>
            <person name="Albertini A.M."/>
            <person name="Alloni G."/>
            <person name="Azevedo V."/>
            <person name="Bertero M.G."/>
            <person name="Bessieres P."/>
            <person name="Bolotin A."/>
            <person name="Borchert S."/>
            <person name="Borriss R."/>
            <person name="Boursier L."/>
            <person name="Brans A."/>
            <person name="Braun M."/>
            <person name="Brignell S.C."/>
            <person name="Bron S."/>
            <person name="Brouillet S."/>
            <person name="Bruschi C.V."/>
            <person name="Caldwell B."/>
            <person name="Capuano V."/>
            <person name="Carter N.M."/>
            <person name="Choi S.-K."/>
            <person name="Codani J.-J."/>
            <person name="Connerton I.F."/>
            <person name="Cummings N.J."/>
            <person name="Daniel R.A."/>
            <person name="Denizot F."/>
            <person name="Devine K.M."/>
            <person name="Duesterhoeft A."/>
            <person name="Ehrlich S.D."/>
            <person name="Emmerson P.T."/>
            <person name="Entian K.-D."/>
            <person name="Errington J."/>
            <person name="Fabret C."/>
            <person name="Ferrari E."/>
            <person name="Foulger D."/>
            <person name="Fritz C."/>
            <person name="Fujita M."/>
            <person name="Fujita Y."/>
            <person name="Fuma S."/>
            <person name="Galizzi A."/>
            <person name="Galleron N."/>
            <person name="Ghim S.-Y."/>
            <person name="Glaser P."/>
            <person name="Goffeau A."/>
            <person name="Golightly E.J."/>
            <person name="Grandi G."/>
            <person name="Guiseppi G."/>
            <person name="Guy B.J."/>
            <person name="Haga K."/>
            <person name="Haiech J."/>
            <person name="Harwood C.R."/>
            <person name="Henaut A."/>
            <person name="Hilbert H."/>
            <person name="Holsappel S."/>
            <person name="Hosono S."/>
            <person name="Hullo M.-F."/>
            <person name="Itaya M."/>
            <person name="Jones L.-M."/>
            <person name="Joris B."/>
            <person name="Karamata D."/>
            <person name="Kasahara Y."/>
            <person name="Klaerr-Blanchard M."/>
            <person name="Klein C."/>
            <person name="Kobayashi Y."/>
            <person name="Koetter P."/>
            <person name="Koningstein G."/>
            <person name="Krogh S."/>
            <person name="Kumano M."/>
            <person name="Kurita K."/>
            <person name="Lapidus A."/>
            <person name="Lardinois S."/>
            <person name="Lauber J."/>
            <person name="Lazarevic V."/>
            <person name="Lee S.-M."/>
            <person name="Levine A."/>
            <person name="Liu H."/>
            <person name="Masuda S."/>
            <person name="Mauel C."/>
            <person name="Medigue C."/>
            <person name="Medina N."/>
            <person name="Mellado R.P."/>
            <person name="Mizuno M."/>
            <person name="Moestl D."/>
            <person name="Nakai S."/>
            <person name="Noback M."/>
            <person name="Noone D."/>
            <person name="O'Reilly M."/>
            <person name="Ogawa K."/>
            <person name="Ogiwara A."/>
            <person name="Oudega B."/>
            <person name="Park S.-H."/>
            <person name="Parro V."/>
            <person name="Pohl T.M."/>
            <person name="Portetelle D."/>
            <person name="Porwollik S."/>
            <person name="Prescott A.M."/>
            <person name="Presecan E."/>
            <person name="Pujic P."/>
            <person name="Purnelle B."/>
            <person name="Rapoport G."/>
            <person name="Rey M."/>
            <person name="Reynolds S."/>
            <person name="Rieger M."/>
            <person name="Rivolta C."/>
            <person name="Rocha E."/>
            <person name="Roche B."/>
            <person name="Rose M."/>
            <person name="Sadaie Y."/>
            <person name="Sato T."/>
            <person name="Scanlan E."/>
            <person name="Schleich S."/>
            <person name="Schroeter R."/>
            <person name="Scoffone F."/>
            <person name="Sekiguchi J."/>
            <person name="Sekowska A."/>
            <person name="Seror S.J."/>
            <person name="Serror P."/>
            <person name="Shin B.-S."/>
            <person name="Soldo B."/>
            <person name="Sorokin A."/>
            <person name="Tacconi E."/>
            <person name="Takagi T."/>
            <person name="Takahashi H."/>
            <person name="Takemaru K."/>
            <person name="Takeuchi M."/>
            <person name="Tamakoshi A."/>
            <person name="Tanaka T."/>
            <person name="Terpstra P."/>
            <person name="Tognoni A."/>
            <person name="Tosato V."/>
            <person name="Uchiyama S."/>
            <person name="Vandenbol M."/>
            <person name="Vannier F."/>
            <person name="Vassarotti A."/>
            <person name="Viari A."/>
            <person name="Wambutt R."/>
            <person name="Wedler E."/>
            <person name="Wedler H."/>
            <person name="Weitzenegger T."/>
            <person name="Winters P."/>
            <person name="Wipat A."/>
            <person name="Yamamoto H."/>
            <person name="Yamane K."/>
            <person name="Yasumoto K."/>
            <person name="Yata K."/>
            <person name="Yoshida K."/>
            <person name="Yoshikawa H.-F."/>
            <person name="Zumstein E."/>
            <person name="Yoshikawa H."/>
            <person name="Danchin A."/>
        </authorList>
    </citation>
    <scope>NUCLEOTIDE SEQUENCE [LARGE SCALE GENOMIC DNA]</scope>
    <source>
        <strain>168</strain>
    </source>
</reference>
<reference key="2">
    <citation type="journal article" date="2012" name="FEBS Lett.">
        <title>A novel family of toxin/antitoxin proteins in Bacillus species.</title>
        <authorList>
            <person name="Holberger L.E."/>
            <person name="Garza-Sanchez F."/>
            <person name="Lamoureux J."/>
            <person name="Low D.A."/>
            <person name="Hayes C.S."/>
        </authorList>
    </citation>
    <scope>FUNCTION AS AN IMMUNITY PROTEIN</scope>
    <scope>EXPRESSION IN E.COLI</scope>
    <source>
        <strain>168</strain>
    </source>
</reference>
<reference key="3">
    <citation type="journal article" date="2021" name="PLoS Genet.">
        <title>Diverse LXG toxin and antitoxin systems specifically mediate intraspecies competition in Bacillus subtilis biofilms.</title>
        <authorList>
            <person name="Kobayashi K."/>
        </authorList>
    </citation>
    <scope>FUNCTION AS AN IMMUNITY PROTEIN</scope>
    <scope>INDUCTION</scope>
    <scope>DISRUPTION PHENOTYPE</scope>
    <source>
        <strain>168 / Marburg / ATCC 6051 / DSM 10 / JCM 1465 / NBRC 13719 / NCIMB 3610 / NRRL NRS-744 / VKM B-501</strain>
    </source>
</reference>
<sequence>MSIDMLIKKIASTSDCRLFEADGLPVIDEKHQLPKDISEFYEQCGGAVLYENADYPIYIVRPAEFELANPIIVGELCEEDISSEWYIVCTDGKGEYLTIDLNDQRKGKCYDSFFDRHGIVGETQVIASSFTDLIQRLLENKGKHWYWLRDDYVSLGDAYDGIEIE</sequence>
<evidence type="ECO:0000269" key="1">
    <source>
    </source>
</evidence>
<evidence type="ECO:0000269" key="2">
    <source>
    </source>
</evidence>
<evidence type="ECO:0000305" key="3"/>
<keyword id="KW-0963">Cytoplasm</keyword>
<keyword id="KW-1185">Reference proteome</keyword>
<accession>O31997</accession>
<gene>
    <name type="primary">yokJ</name>
    <name type="ordered locus">BSU21570</name>
</gene>
<name>YOKJ_BACSU</name>
<feature type="chain" id="PRO_0000360584" description="Immunity protein YokJ">
    <location>
        <begin position="1"/>
        <end position="165"/>
    </location>
</feature>
<dbReference type="EMBL" id="AL009126">
    <property type="protein sequence ID" value="CAB14075.1"/>
    <property type="molecule type" value="Genomic_DNA"/>
</dbReference>
<dbReference type="RefSeq" id="NP_390040.1">
    <property type="nucleotide sequence ID" value="NC_000964.3"/>
</dbReference>
<dbReference type="RefSeq" id="WP_003246188.1">
    <property type="nucleotide sequence ID" value="NZ_OZ025638.1"/>
</dbReference>
<dbReference type="FunCoup" id="O31997">
    <property type="interactions" value="26"/>
</dbReference>
<dbReference type="STRING" id="224308.BSU21570"/>
<dbReference type="jPOST" id="O31997"/>
<dbReference type="PaxDb" id="224308-BSU21570"/>
<dbReference type="EnsemblBacteria" id="CAB14075">
    <property type="protein sequence ID" value="CAB14075"/>
    <property type="gene ID" value="BSU_21570"/>
</dbReference>
<dbReference type="GeneID" id="939114"/>
<dbReference type="KEGG" id="bsu:BSU21570"/>
<dbReference type="PATRIC" id="fig|224308.179.peg.2355"/>
<dbReference type="eggNOG" id="ENOG502ZAX0">
    <property type="taxonomic scope" value="Bacteria"/>
</dbReference>
<dbReference type="InParanoid" id="O31997"/>
<dbReference type="OrthoDB" id="3375677at2"/>
<dbReference type="BioCyc" id="BSUB:BSU21570-MONOMER"/>
<dbReference type="Proteomes" id="UP000001570">
    <property type="component" value="Chromosome"/>
</dbReference>
<dbReference type="GO" id="GO:0005737">
    <property type="term" value="C:cytoplasm"/>
    <property type="evidence" value="ECO:0007669"/>
    <property type="project" value="UniProtKB-SubCell"/>
</dbReference>
<dbReference type="Gene3D" id="3.40.1580.10">
    <property type="entry name" value="SMI1/KNR4-like"/>
    <property type="match status" value="1"/>
</dbReference>
<dbReference type="InterPro" id="IPR018958">
    <property type="entry name" value="Knr4/Smi1-like_dom"/>
</dbReference>
<dbReference type="InterPro" id="IPR037883">
    <property type="entry name" value="Knr4/Smi1-like_sf"/>
</dbReference>
<dbReference type="Pfam" id="PF09346">
    <property type="entry name" value="SMI1_KNR4"/>
    <property type="match status" value="1"/>
</dbReference>
<dbReference type="SMART" id="SM00860">
    <property type="entry name" value="SMI1_KNR4"/>
    <property type="match status" value="1"/>
</dbReference>
<dbReference type="SUPFAM" id="SSF160631">
    <property type="entry name" value="SMI1/KNR4-like"/>
    <property type="match status" value="1"/>
</dbReference>
<comment type="function">
    <text evidence="1 2">Immunity component of one of 6 LXG toxin-immunity modules in this strain. They promote kin selection, mediate competition in biofilms, and drive spatial segregation of different strains, indicating that LXG toxins may help avoid warfare between strains in biofilms. Mediates intercellular competition during biofilm formation; disruption of the operon disadvantages the bacteria, but overexpression of the cognate immunity protein restores growth in competition with wild-type. In situ neutralizes the toxic effect of cognate toxin YokI (PubMed:34280190). Neutralizes the ability to inhibit growth of cognate toxin YokI upon expression in E.coli. Does not have immunity protein activity on other LXG toxins (PubMed:22200572).</text>
</comment>
<comment type="subunit">
    <text evidence="3">Probably interacts with cognate toxin YokI but not with other non-cognate toxins. The interaction inhibits the toxic activity of YokI (Probable).</text>
</comment>
<comment type="subcellular location">
    <subcellularLocation>
        <location evidence="3">Cytoplasm</location>
    </subcellularLocation>
</comment>
<comment type="induction">
    <text evidence="2">Expressed on rich and minimal solid media likely in early stationary phase; not dependent on DegSU. Not expressed in liquid LB, but only under conditions that promote biofilm formation.</text>
</comment>
<comment type="disruption phenotype">
    <text evidence="2">Deletion of the yokI-yokJ operon has no visible growth phenotype, however it is out-competed by wild-type cells.</text>
</comment>
<proteinExistence type="evidence at protein level"/>
<organism>
    <name type="scientific">Bacillus subtilis (strain 168)</name>
    <dbReference type="NCBI Taxonomy" id="224308"/>
    <lineage>
        <taxon>Bacteria</taxon>
        <taxon>Bacillati</taxon>
        <taxon>Bacillota</taxon>
        <taxon>Bacilli</taxon>
        <taxon>Bacillales</taxon>
        <taxon>Bacillaceae</taxon>
        <taxon>Bacillus</taxon>
    </lineage>
</organism>
<protein>
    <recommendedName>
        <fullName>Immunity protein YokJ</fullName>
    </recommendedName>
    <alternativeName>
        <fullName>SPbeta prophage-derived uncharacterized YokJ</fullName>
    </alternativeName>
</protein>